<feature type="chain" id="PRO_0000305114" description="Delta-actitoxin-Axm1d">
    <location>
        <begin position="1"/>
        <end position="47"/>
    </location>
</feature>
<feature type="disulfide bond" evidence="1">
    <location>
        <begin position="4"/>
        <end position="44"/>
    </location>
</feature>
<feature type="disulfide bond" evidence="1">
    <location>
        <begin position="6"/>
        <end position="34"/>
    </location>
</feature>
<feature type="disulfide bond" evidence="1">
    <location>
        <begin position="27"/>
        <end position="45"/>
    </location>
</feature>
<reference key="1">
    <citation type="journal article" date="1998" name="Toxicon">
        <title>Identification and characterization of novel sodium channel toxins from the sea anemone Anthopleura xanthogrammica.</title>
        <authorList>
            <person name="Kelso G.J."/>
            <person name="Blumenthal K.M."/>
        </authorList>
    </citation>
    <scope>NUCLEOTIDE SEQUENCE [MRNA]</scope>
    <source>
        <tissue>Tentacle</tissue>
    </source>
</reference>
<reference key="2">
    <citation type="journal article" date="2012" name="Toxicon">
        <title>Development of a rational nomenclature for naming peptide and protein toxins from sea anemones.</title>
        <authorList>
            <person name="Oliveira J.S."/>
            <person name="Fuentes-Silva D."/>
            <person name="King G.F."/>
        </authorList>
    </citation>
    <scope>NOMENCLATURE</scope>
</reference>
<protein>
    <recommendedName>
        <fullName evidence="2">Delta-actitoxin-Axm1d</fullName>
        <shortName evidence="2">Delta-AITX-Axm1d</shortName>
    </recommendedName>
    <alternativeName>
        <fullName evidence="3">PCR2-1</fullName>
    </alternativeName>
    <alternativeName>
        <fullName evidence="4">Toxin PCR3</fullName>
    </alternativeName>
</protein>
<organism>
    <name type="scientific">Anthopleura xanthogrammica</name>
    <name type="common">Giant green sea anemone</name>
    <name type="synonym">Actinia xanthogrammica</name>
    <dbReference type="NCBI Taxonomy" id="6112"/>
    <lineage>
        <taxon>Eukaryota</taxon>
        <taxon>Metazoa</taxon>
        <taxon>Cnidaria</taxon>
        <taxon>Anthozoa</taxon>
        <taxon>Hexacorallia</taxon>
        <taxon>Actiniaria</taxon>
        <taxon>Actiniidae</taxon>
        <taxon>Anthopleura</taxon>
    </lineage>
</organism>
<proteinExistence type="evidence at transcript level"/>
<comment type="function">
    <text evidence="1">Binds specifically to voltage-gated sodium channels (Nav), thereby delaying their inactivation during signal transduction. Thus it strongly stimulates mammalian cardiac muscle contraction.</text>
</comment>
<comment type="subcellular location">
    <subcellularLocation>
        <location evidence="4">Secreted</location>
    </subcellularLocation>
    <subcellularLocation>
        <location evidence="4">Nematocyst</location>
    </subcellularLocation>
</comment>
<comment type="similarity">
    <text evidence="4">Belongs to the sea anemone sodium channel inhibitory toxin family. Type I subfamily.</text>
</comment>
<dbReference type="SMR" id="P0C5G0"/>
<dbReference type="GO" id="GO:0005576">
    <property type="term" value="C:extracellular region"/>
    <property type="evidence" value="ECO:0007669"/>
    <property type="project" value="UniProtKB-SubCell"/>
</dbReference>
<dbReference type="GO" id="GO:0042151">
    <property type="term" value="C:nematocyst"/>
    <property type="evidence" value="ECO:0007669"/>
    <property type="project" value="UniProtKB-SubCell"/>
</dbReference>
<dbReference type="GO" id="GO:0017080">
    <property type="term" value="F:sodium channel regulator activity"/>
    <property type="evidence" value="ECO:0007669"/>
    <property type="project" value="UniProtKB-KW"/>
</dbReference>
<dbReference type="GO" id="GO:0090729">
    <property type="term" value="F:toxin activity"/>
    <property type="evidence" value="ECO:0007669"/>
    <property type="project" value="UniProtKB-KW"/>
</dbReference>
<dbReference type="GO" id="GO:0009966">
    <property type="term" value="P:regulation of signal transduction"/>
    <property type="evidence" value="ECO:0007669"/>
    <property type="project" value="InterPro"/>
</dbReference>
<dbReference type="Gene3D" id="2.20.20.10">
    <property type="entry name" value="Anthopleurin-A"/>
    <property type="match status" value="1"/>
</dbReference>
<dbReference type="InterPro" id="IPR000693">
    <property type="entry name" value="Anenome_toxin"/>
</dbReference>
<dbReference type="InterPro" id="IPR023355">
    <property type="entry name" value="Myo_ane_neurotoxin_sf"/>
</dbReference>
<dbReference type="Pfam" id="PF00706">
    <property type="entry name" value="Toxin_4"/>
    <property type="match status" value="1"/>
</dbReference>
<dbReference type="PIRSF" id="PIRSF001905">
    <property type="entry name" value="Anenome_toxin"/>
    <property type="match status" value="1"/>
</dbReference>
<dbReference type="SUPFAM" id="SSF57392">
    <property type="entry name" value="Defensin-like"/>
    <property type="match status" value="1"/>
</dbReference>
<accession>P0C5G0</accession>
<name>NA13_ANTXA</name>
<evidence type="ECO:0000250" key="1">
    <source>
        <dbReference type="UniProtKB" id="P10454"/>
    </source>
</evidence>
<evidence type="ECO:0000303" key="2">
    <source>
    </source>
</evidence>
<evidence type="ECO:0000303" key="3">
    <source>
    </source>
</evidence>
<evidence type="ECO:0000305" key="4"/>
<keyword id="KW-0123">Cardiotoxin</keyword>
<keyword id="KW-1015">Disulfide bond</keyword>
<keyword id="KW-0872">Ion channel impairing toxin</keyword>
<keyword id="KW-0166">Nematocyst</keyword>
<keyword id="KW-0528">Neurotoxin</keyword>
<keyword id="KW-0964">Secreted</keyword>
<keyword id="KW-0800">Toxin</keyword>
<keyword id="KW-0738">Voltage-gated sodium channel impairing toxin</keyword>
<sequence>GAACFCDSDGPSVSGNTLSGILWLAGCPSGWHNCKAHGPNIGWCCKK</sequence>